<gene>
    <name type="ORF">BLLF1</name>
</gene>
<dbReference type="EMBL" id="L07923">
    <property type="protein sequence ID" value="AAA02787.1"/>
    <property type="molecule type" value="Genomic_DNA"/>
</dbReference>
<dbReference type="EMBL" id="DQ279927">
    <property type="protein sequence ID" value="ABB89242.1"/>
    <property type="molecule type" value="Genomic_DNA"/>
</dbReference>
<dbReference type="RefSeq" id="YP_001129462.1">
    <property type="nucleotide sequence ID" value="NC_009334.1"/>
</dbReference>
<dbReference type="SMR" id="P68343"/>
<dbReference type="IntAct" id="P68343">
    <property type="interactions" value="1"/>
</dbReference>
<dbReference type="KEGG" id="vg:5176231"/>
<dbReference type="Proteomes" id="UP000007639">
    <property type="component" value="Genome"/>
</dbReference>
<dbReference type="GO" id="GO:0033644">
    <property type="term" value="C:host cell membrane"/>
    <property type="evidence" value="ECO:0007669"/>
    <property type="project" value="UniProtKB-SubCell"/>
</dbReference>
<dbReference type="GO" id="GO:0016020">
    <property type="term" value="C:membrane"/>
    <property type="evidence" value="ECO:0007669"/>
    <property type="project" value="UniProtKB-KW"/>
</dbReference>
<dbReference type="GO" id="GO:0055036">
    <property type="term" value="C:virion membrane"/>
    <property type="evidence" value="ECO:0007669"/>
    <property type="project" value="UniProtKB-SubCell"/>
</dbReference>
<dbReference type="Gene3D" id="2.60.40.2800">
    <property type="match status" value="1"/>
</dbReference>
<dbReference type="Gene3D" id="2.60.40.2810">
    <property type="match status" value="1"/>
</dbReference>
<dbReference type="Gene3D" id="2.60.40.2820">
    <property type="match status" value="1"/>
</dbReference>
<dbReference type="InterPro" id="IPR048692">
    <property type="entry name" value="GP350_C_dom_herpes"/>
</dbReference>
<dbReference type="InterPro" id="IPR048698">
    <property type="entry name" value="GP350_C_dom_herpes_sf"/>
</dbReference>
<dbReference type="InterPro" id="IPR007796">
    <property type="entry name" value="GP350_N_A_dom_herpes"/>
</dbReference>
<dbReference type="InterPro" id="IPR048700">
    <property type="entry name" value="GP350_N_A_dom_herpes_sf"/>
</dbReference>
<dbReference type="InterPro" id="IPR048689">
    <property type="entry name" value="GP350_N_B_dom_herpes"/>
</dbReference>
<dbReference type="Pfam" id="PF05109">
    <property type="entry name" value="Herpes_gp350_A"/>
    <property type="match status" value="1"/>
</dbReference>
<dbReference type="Pfam" id="PF20676">
    <property type="entry name" value="Herpes_gp350_B"/>
    <property type="match status" value="1"/>
</dbReference>
<dbReference type="Pfam" id="PF20677">
    <property type="entry name" value="Herpes_gp350_C"/>
    <property type="match status" value="1"/>
</dbReference>
<dbReference type="Pfam" id="PF20678">
    <property type="entry name" value="HV_Gp350_C-term"/>
    <property type="match status" value="1"/>
</dbReference>
<comment type="function">
    <text evidence="1">Initiates virion attachment to host B-lymphocyte cell, leading to virus entry. Acts by binding to host CR2 at the surface of B-lymphocytes, facilitating the binding of viral glycoprotein gp42 to HLA class II molecules. Attachment triggers virion-host membrane fusion and invasion of the host cell (By similarity).</text>
</comment>
<comment type="subunit">
    <text evidence="1">Interacts with host CR2.</text>
</comment>
<comment type="subcellular location">
    <subcellularLocation>
        <location>Virion membrane</location>
        <topology>Single-pass membrane protein</topology>
    </subcellularLocation>
    <subcellularLocation>
        <location>Host membrane</location>
        <topology>Single-pass membrane protein</topology>
    </subcellularLocation>
    <text evidence="1">Most abundant component of the viral envelope.</text>
</comment>
<comment type="alternative products">
    <event type="alternative splicing"/>
    <isoform>
        <id>P68343-1</id>
        <name>GP350</name>
        <sequence type="displayed"/>
    </isoform>
    <isoform>
        <id>P68343-2</id>
        <name>GP220</name>
        <sequence type="described" ref="VSP_041035"/>
    </isoform>
</comment>
<comment type="PTM">
    <text evidence="1">Extensively glycosylated.</text>
</comment>
<comment type="biotechnology">
    <text>Primary surface antigen capable of inducing and reacting with virus-neutralizing antibodies. Almost all EBV candidate vaccines are based on gp350 proteins.</text>
</comment>
<comment type="similarity">
    <text evidence="4">Belongs to the Epstein-Barr GP350 family.</text>
</comment>
<organismHost>
    <name type="scientific">Homo sapiens</name>
    <name type="common">Human</name>
    <dbReference type="NCBI Taxonomy" id="9606"/>
</organismHost>
<feature type="chain" id="PRO_0000116184" description="Envelope glycoprotein GP350">
    <location>
        <begin position="1"/>
        <end position="886"/>
    </location>
</feature>
<feature type="topological domain" description="Virion surface" evidence="2">
    <location>
        <begin position="1"/>
        <end position="839"/>
    </location>
</feature>
<feature type="transmembrane region" description="Helical" evidence="2">
    <location>
        <begin position="840"/>
        <end position="860"/>
    </location>
</feature>
<feature type="topological domain" description="Intravirion" evidence="2">
    <location>
        <begin position="861"/>
        <end position="886"/>
    </location>
</feature>
<feature type="region of interest" description="Disordered" evidence="3">
    <location>
        <begin position="423"/>
        <end position="810"/>
    </location>
</feature>
<feature type="compositionally biased region" description="Low complexity" evidence="3">
    <location>
        <begin position="428"/>
        <end position="437"/>
    </location>
</feature>
<feature type="compositionally biased region" description="Polar residues" evidence="3">
    <location>
        <begin position="442"/>
        <end position="488"/>
    </location>
</feature>
<feature type="compositionally biased region" description="Low complexity" evidence="3">
    <location>
        <begin position="507"/>
        <end position="595"/>
    </location>
</feature>
<feature type="compositionally biased region" description="Polar residues" evidence="3">
    <location>
        <begin position="596"/>
        <end position="637"/>
    </location>
</feature>
<feature type="compositionally biased region" description="Low complexity" evidence="3">
    <location>
        <begin position="638"/>
        <end position="660"/>
    </location>
</feature>
<feature type="compositionally biased region" description="Low complexity" evidence="3">
    <location>
        <begin position="684"/>
        <end position="699"/>
    </location>
</feature>
<feature type="compositionally biased region" description="Polar residues" evidence="3">
    <location>
        <begin position="704"/>
        <end position="720"/>
    </location>
</feature>
<feature type="compositionally biased region" description="Polar residues" evidence="3">
    <location>
        <begin position="733"/>
        <end position="760"/>
    </location>
</feature>
<feature type="compositionally biased region" description="Low complexity" evidence="3">
    <location>
        <begin position="761"/>
        <end position="771"/>
    </location>
</feature>
<feature type="compositionally biased region" description="Polar residues" evidence="3">
    <location>
        <begin position="773"/>
        <end position="806"/>
    </location>
</feature>
<feature type="glycosylation site" description="N-linked (GlcNAc...) asparagine; by host" evidence="2">
    <location>
        <position position="47"/>
    </location>
</feature>
<feature type="glycosylation site" description="N-linked (GlcNAc...) asparagine; by host" evidence="2">
    <location>
        <position position="87"/>
    </location>
</feature>
<feature type="glycosylation site" description="N-linked (GlcNAc...) asparagine; by host" evidence="2">
    <location>
        <position position="114"/>
    </location>
</feature>
<feature type="glycosylation site" description="N-linked (GlcNAc...) asparagine; by host" evidence="2">
    <location>
        <position position="166"/>
    </location>
</feature>
<feature type="glycosylation site" description="N-linked (GlcNAc...) asparagine; by host" evidence="2">
    <location>
        <position position="169"/>
    </location>
</feature>
<feature type="glycosylation site" description="N-linked (GlcNAc...) asparagine; by host" evidence="2">
    <location>
        <position position="195"/>
    </location>
</feature>
<feature type="glycosylation site" description="N-linked (GlcNAc...) asparagine; by host" evidence="2">
    <location>
        <position position="229"/>
    </location>
</feature>
<feature type="glycosylation site" description="N-linked (GlcNAc...) asparagine; by host" evidence="2">
    <location>
        <position position="277"/>
    </location>
</feature>
<feature type="glycosylation site" description="N-linked (GlcNAc...) asparagine; by host" evidence="2">
    <location>
        <position position="318"/>
    </location>
</feature>
<feature type="glycosylation site" description="N-linked (GlcNAc...) asparagine; by host" evidence="2">
    <location>
        <position position="328"/>
    </location>
</feature>
<feature type="glycosylation site" description="N-linked (GlcNAc...) asparagine; by host" evidence="2">
    <location>
        <position position="345"/>
    </location>
</feature>
<feature type="glycosylation site" description="N-linked (GlcNAc...) asparagine; by host" evidence="2">
    <location>
        <position position="356"/>
    </location>
</feature>
<feature type="glycosylation site" description="N-linked (GlcNAc...) asparagine; by host" evidence="2">
    <location>
        <position position="378"/>
    </location>
</feature>
<feature type="glycosylation site" description="N-linked (GlcNAc...) asparagine; by host" evidence="2">
    <location>
        <position position="386"/>
    </location>
</feature>
<feature type="glycosylation site" description="N-linked (GlcNAc...) asparagine; by host" evidence="2">
    <location>
        <position position="411"/>
    </location>
</feature>
<feature type="glycosylation site" description="N-linked (GlcNAc...) asparagine; by host" evidence="2">
    <location>
        <position position="435"/>
    </location>
</feature>
<feature type="glycosylation site" description="N-linked (GlcNAc...) asparagine; by host" evidence="2">
    <location>
        <position position="443"/>
    </location>
</feature>
<feature type="glycosylation site" description="N-linked (GlcNAc...) asparagine; by host" evidence="2">
    <location>
        <position position="457"/>
    </location>
</feature>
<feature type="glycosylation site" description="N-linked (GlcNAc...) asparagine; by host" evidence="2">
    <location>
        <position position="497"/>
    </location>
</feature>
<feature type="glycosylation site" description="N-linked (GlcNAc...) asparagine; by host" evidence="2">
    <location>
        <position position="519"/>
    </location>
</feature>
<feature type="glycosylation site" description="N-linked (GlcNAc...) asparagine; by host" evidence="2">
    <location>
        <position position="533"/>
    </location>
</feature>
<feature type="glycosylation site" description="N-linked (GlcNAc...) asparagine; by host" evidence="2">
    <location>
        <position position="554"/>
    </location>
</feature>
<feature type="glycosylation site" description="N-linked (GlcNAc...) asparagine; by host" evidence="2">
    <location>
        <position position="568"/>
    </location>
</feature>
<feature type="glycosylation site" description="N-linked (GlcNAc...) asparagine; by host" evidence="2">
    <location>
        <position position="589"/>
    </location>
</feature>
<feature type="glycosylation site" description="N-linked (GlcNAc...) asparagine; by host" evidence="2">
    <location>
        <position position="603"/>
    </location>
</feature>
<feature type="glycosylation site" description="N-linked (GlcNAc...) asparagine; by host" evidence="2">
    <location>
        <position position="606"/>
    </location>
</feature>
<feature type="glycosylation site" description="N-linked (GlcNAc...) asparagine; by host" evidence="2">
    <location>
        <position position="624"/>
    </location>
</feature>
<feature type="glycosylation site" description="N-linked (GlcNAc...) asparagine; by host" evidence="2">
    <location>
        <position position="635"/>
    </location>
</feature>
<feature type="glycosylation site" description="N-linked (GlcNAc...) asparagine; by host" evidence="2">
    <location>
        <position position="662"/>
    </location>
</feature>
<feature type="glycosylation site" description="N-linked (GlcNAc...) asparagine; by host" evidence="2">
    <location>
        <position position="680"/>
    </location>
</feature>
<feature type="glycosylation site" description="N-linked (GlcNAc...) asparagine; by host" evidence="2">
    <location>
        <position position="714"/>
    </location>
</feature>
<feature type="glycosylation site" description="N-linked (GlcNAc...) asparagine; by host" evidence="2">
    <location>
        <position position="725"/>
    </location>
</feature>
<feature type="glycosylation site" description="N-linked (GlcNAc...) asparagine; by host" evidence="2">
    <location>
        <position position="734"/>
    </location>
</feature>
<feature type="glycosylation site" description="N-linked (GlcNAc...) asparagine; by host" evidence="2">
    <location>
        <position position="759"/>
    </location>
</feature>
<feature type="glycosylation site" description="N-linked (GlcNAc...) asparagine; by host" evidence="2">
    <location>
        <position position="794"/>
    </location>
</feature>
<feature type="glycosylation site" description="N-linked (GlcNAc...) asparagine; by host" evidence="2">
    <location>
        <position position="837"/>
    </location>
</feature>
<feature type="splice variant" id="VSP_041035" description="In isoform GP220." evidence="4">
    <location>
        <begin position="502"/>
        <end position="729"/>
    </location>
</feature>
<proteinExistence type="evidence at protein level"/>
<evidence type="ECO:0000250" key="1"/>
<evidence type="ECO:0000255" key="2"/>
<evidence type="ECO:0000256" key="3">
    <source>
        <dbReference type="SAM" id="MobiDB-lite"/>
    </source>
</evidence>
<evidence type="ECO:0000305" key="4"/>
<accession>P68343</accession>
<accession>Q07284</accession>
<accession>Q1HVG6</accession>
<reference key="1">
    <citation type="journal article" date="1993" name="Virology">
        <title>The Epstein-Barr virus candidate vaccine antigen gp340/220 is highly conserved between virus types A and B.</title>
        <authorList>
            <person name="Lees J.F."/>
            <person name="Arrand J.E."/>
            <person name="Pepper S.V."/>
            <person name="Stewart J.P."/>
            <person name="Mackett M."/>
            <person name="Arrand J.R."/>
        </authorList>
    </citation>
    <scope>NUCLEOTIDE SEQUENCE [GENOMIC DNA]</scope>
</reference>
<reference key="2">
    <citation type="journal article" date="2006" name="Virology">
        <title>The genome of Epstein-Barr virus type 2 strain AG876.</title>
        <authorList>
            <person name="Dolan A."/>
            <person name="Addison C."/>
            <person name="Gatherer D."/>
            <person name="Davison A.J."/>
            <person name="McGeoch D.J."/>
        </authorList>
    </citation>
    <scope>NUCLEOTIDE SEQUENCE [LARGE SCALE GENOMIC DNA]</scope>
</reference>
<organism>
    <name type="scientific">Epstein-Barr virus (strain AG876)</name>
    <name type="common">HHV-4</name>
    <name type="synonym">Human herpesvirus 4</name>
    <dbReference type="NCBI Taxonomy" id="82830"/>
    <lineage>
        <taxon>Viruses</taxon>
        <taxon>Duplodnaviria</taxon>
        <taxon>Heunggongvirae</taxon>
        <taxon>Peploviricota</taxon>
        <taxon>Herviviricetes</taxon>
        <taxon>Herpesvirales</taxon>
        <taxon>Orthoherpesviridae</taxon>
        <taxon>Gammaherpesvirinae</taxon>
        <taxon>Lymphocryptovirus</taxon>
        <taxon>Lymphocryptovirus humangamma4</taxon>
        <taxon>Epstein-Barr virus (strain GD1)</taxon>
    </lineage>
</organism>
<protein>
    <recommendedName>
        <fullName>Envelope glycoprotein GP350</fullName>
    </recommendedName>
    <alternativeName>
        <fullName>Membrane antigen</fullName>
        <shortName>MA</shortName>
    </alternativeName>
</protein>
<name>GP350_EBVA8</name>
<sequence length="886" mass="92389">MEAALLVCQYTIQSLIQLTRDDPGFFNVEILEFPFYPACNVCTADVNATINFDVGGKKHKLNLDFGLLTPHTKAVYQPRGAFGGSENATNLFLLELLGAGELALTMRSKKLPINITTGEEQQVSLESVDVYFQDVFGTMWCHHAEMQNPVYLIPETVPYIKWDNCNSTNITAVVRAQGLDVTLPLSLPTSAQDSNFSVKTEMLGNEIDIECIMEDGEISQVLPGDNKFNITCSGYESHVPSGGILTSTSPVATPIPGTGYAYSLRLTPRPVSRFLGNNSILYVFYSGNGPKASGGDYCIQSNIVFSDEIPASQDMPTNTTDITYVGDNATYSVPMVTSEDANSPNVTVTAFWAWPNNTETDFKCKWTLTSGTPSGCENISGAFASNRTFDITVSGLGTAPKTLIITRTATNATTTTHKVIFSKAPESTTTSPTLNTTGFAAPNTTTGLPSSTHVPTNLTAPASTGPTVSTADVTSPTPAGTTSGASPVTPSPSPRDNGTESKAPDMTSPTSAVTTPTPNATSPTPAVTTPTPNATSPTLGKTSPTSAVTTPTPNATSPTPAVTTPTPNATIPTLGKTSPTSAVTTPTPNATSPTVGETSPQANTTNHTLGGTSSTPVVTSPPKNATSAVTTGQHNITSSSTSSMSLRPSSISETLSPSTSDNSTSHMPLLTSAHPTGGENITQVTPASTSTHHVSTSSPAPRPGTTSQASGPGNSSTSTKPGEVNVTKGTPPKNATSPQAPSGQKTAVPTVTSTGGKANSTTGGKHTTGHGARTSTEPTTDYGGDSTTPRTRYNATTYLPPSTSSKLRPRWTFTSPPVTTAQATVPVPPTSQPRFSNLSMLVLQWASLAVLTLLLLLVMADCAFRRNLSTSHTYTTPPYDDAETYV</sequence>
<keyword id="KW-0025">Alternative splicing</keyword>
<keyword id="KW-0325">Glycoprotein</keyword>
<keyword id="KW-1043">Host membrane</keyword>
<keyword id="KW-0945">Host-virus interaction</keyword>
<keyword id="KW-0426">Late protein</keyword>
<keyword id="KW-0472">Membrane</keyword>
<keyword id="KW-1185">Reference proteome</keyword>
<keyword id="KW-0812">Transmembrane</keyword>
<keyword id="KW-1133">Transmembrane helix</keyword>
<keyword id="KW-0946">Virion</keyword>